<feature type="chain" id="PRO_1000001110" description="Octanoyltransferase">
    <location>
        <begin position="1"/>
        <end position="230"/>
    </location>
</feature>
<feature type="domain" description="BPL/LPL catalytic" evidence="2">
    <location>
        <begin position="38"/>
        <end position="215"/>
    </location>
</feature>
<feature type="active site" description="Acyl-thioester intermediate" evidence="1">
    <location>
        <position position="176"/>
    </location>
</feature>
<feature type="binding site" evidence="1">
    <location>
        <begin position="76"/>
        <end position="83"/>
    </location>
    <ligand>
        <name>substrate</name>
    </ligand>
</feature>
<feature type="binding site" evidence="1">
    <location>
        <begin position="145"/>
        <end position="147"/>
    </location>
    <ligand>
        <name>substrate</name>
    </ligand>
</feature>
<feature type="binding site" evidence="1">
    <location>
        <begin position="158"/>
        <end position="160"/>
    </location>
    <ligand>
        <name>substrate</name>
    </ligand>
</feature>
<feature type="site" description="Lowers pKa of active site Cys" evidence="1">
    <location>
        <position position="142"/>
    </location>
</feature>
<organism>
    <name type="scientific">Mycobacterium tuberculosis (strain ATCC 25177 / H37Ra)</name>
    <dbReference type="NCBI Taxonomy" id="419947"/>
    <lineage>
        <taxon>Bacteria</taxon>
        <taxon>Bacillati</taxon>
        <taxon>Actinomycetota</taxon>
        <taxon>Actinomycetes</taxon>
        <taxon>Mycobacteriales</taxon>
        <taxon>Mycobacteriaceae</taxon>
        <taxon>Mycobacterium</taxon>
        <taxon>Mycobacterium tuberculosis complex</taxon>
    </lineage>
</organism>
<reference key="1">
    <citation type="journal article" date="2008" name="PLoS ONE">
        <title>Genetic basis of virulence attenuation revealed by comparative genomic analysis of Mycobacterium tuberculosis strain H37Ra versus H37Rv.</title>
        <authorList>
            <person name="Zheng H."/>
            <person name="Lu L."/>
            <person name="Wang B."/>
            <person name="Pu S."/>
            <person name="Zhang X."/>
            <person name="Zhu G."/>
            <person name="Shi W."/>
            <person name="Zhang L."/>
            <person name="Wang H."/>
            <person name="Wang S."/>
            <person name="Zhao G."/>
            <person name="Zhang Y."/>
        </authorList>
    </citation>
    <scope>NUCLEOTIDE SEQUENCE [LARGE SCALE GENOMIC DNA]</scope>
    <source>
        <strain>ATCC 25177 / H37Ra</strain>
    </source>
</reference>
<name>LIPB_MYCTA</name>
<dbReference type="EC" id="2.3.1.181" evidence="1"/>
<dbReference type="EMBL" id="CP000611">
    <property type="protein sequence ID" value="ABQ73995.1"/>
    <property type="molecule type" value="Genomic_DNA"/>
</dbReference>
<dbReference type="RefSeq" id="WP_003411458.1">
    <property type="nucleotide sequence ID" value="NZ_CP016972.1"/>
</dbReference>
<dbReference type="SMR" id="A5U4P5"/>
<dbReference type="GeneID" id="45426193"/>
<dbReference type="KEGG" id="mra:MRA_2233"/>
<dbReference type="eggNOG" id="COG0321">
    <property type="taxonomic scope" value="Bacteria"/>
</dbReference>
<dbReference type="HOGENOM" id="CLU_035168_2_1_11"/>
<dbReference type="UniPathway" id="UPA00538">
    <property type="reaction ID" value="UER00592"/>
</dbReference>
<dbReference type="Proteomes" id="UP000001988">
    <property type="component" value="Chromosome"/>
</dbReference>
<dbReference type="GO" id="GO:0005737">
    <property type="term" value="C:cytoplasm"/>
    <property type="evidence" value="ECO:0007669"/>
    <property type="project" value="UniProtKB-SubCell"/>
</dbReference>
<dbReference type="GO" id="GO:0033819">
    <property type="term" value="F:lipoyl(octanoyl) transferase activity"/>
    <property type="evidence" value="ECO:0007669"/>
    <property type="project" value="UniProtKB-EC"/>
</dbReference>
<dbReference type="GO" id="GO:0036211">
    <property type="term" value="P:protein modification process"/>
    <property type="evidence" value="ECO:0007669"/>
    <property type="project" value="InterPro"/>
</dbReference>
<dbReference type="CDD" id="cd16444">
    <property type="entry name" value="LipB"/>
    <property type="match status" value="1"/>
</dbReference>
<dbReference type="FunFam" id="3.30.930.10:FF:000035">
    <property type="entry name" value="Putative lipoyltransferase 2, mitochondrial"/>
    <property type="match status" value="1"/>
</dbReference>
<dbReference type="Gene3D" id="3.30.930.10">
    <property type="entry name" value="Bira Bifunctional Protein, Domain 2"/>
    <property type="match status" value="1"/>
</dbReference>
<dbReference type="HAMAP" id="MF_00013">
    <property type="entry name" value="LipB"/>
    <property type="match status" value="1"/>
</dbReference>
<dbReference type="InterPro" id="IPR045864">
    <property type="entry name" value="aa-tRNA-synth_II/BPL/LPL"/>
</dbReference>
<dbReference type="InterPro" id="IPR004143">
    <property type="entry name" value="BPL_LPL_catalytic"/>
</dbReference>
<dbReference type="InterPro" id="IPR000544">
    <property type="entry name" value="Octanoyltransferase"/>
</dbReference>
<dbReference type="InterPro" id="IPR020605">
    <property type="entry name" value="Octanoyltransferase_CS"/>
</dbReference>
<dbReference type="NCBIfam" id="TIGR00214">
    <property type="entry name" value="lipB"/>
    <property type="match status" value="1"/>
</dbReference>
<dbReference type="NCBIfam" id="NF010925">
    <property type="entry name" value="PRK14345.1"/>
    <property type="match status" value="1"/>
</dbReference>
<dbReference type="PANTHER" id="PTHR10993:SF7">
    <property type="entry name" value="LIPOYLTRANSFERASE 2, MITOCHONDRIAL-RELATED"/>
    <property type="match status" value="1"/>
</dbReference>
<dbReference type="PANTHER" id="PTHR10993">
    <property type="entry name" value="OCTANOYLTRANSFERASE"/>
    <property type="match status" value="1"/>
</dbReference>
<dbReference type="Pfam" id="PF21948">
    <property type="entry name" value="LplA-B_cat"/>
    <property type="match status" value="1"/>
</dbReference>
<dbReference type="PIRSF" id="PIRSF016262">
    <property type="entry name" value="LPLase"/>
    <property type="match status" value="1"/>
</dbReference>
<dbReference type="SUPFAM" id="SSF55681">
    <property type="entry name" value="Class II aaRS and biotin synthetases"/>
    <property type="match status" value="1"/>
</dbReference>
<dbReference type="PROSITE" id="PS51733">
    <property type="entry name" value="BPL_LPL_CATALYTIC"/>
    <property type="match status" value="1"/>
</dbReference>
<dbReference type="PROSITE" id="PS01313">
    <property type="entry name" value="LIPB"/>
    <property type="match status" value="1"/>
</dbReference>
<keyword id="KW-0012">Acyltransferase</keyword>
<keyword id="KW-0963">Cytoplasm</keyword>
<keyword id="KW-1185">Reference proteome</keyword>
<keyword id="KW-0808">Transferase</keyword>
<proteinExistence type="inferred from homology"/>
<comment type="function">
    <text evidence="1">Catalyzes the transfer of endogenously produced octanoic acid from octanoyl-acyl-carrier-protein onto the lipoyl domains of lipoate-dependent enzymes. Lipoyl-ACP can also act as a substrate although octanoyl-ACP is likely to be the physiological substrate.</text>
</comment>
<comment type="catalytic activity">
    <reaction evidence="1">
        <text>octanoyl-[ACP] + L-lysyl-[protein] = N(6)-octanoyl-L-lysyl-[protein] + holo-[ACP] + H(+)</text>
        <dbReference type="Rhea" id="RHEA:17665"/>
        <dbReference type="Rhea" id="RHEA-COMP:9636"/>
        <dbReference type="Rhea" id="RHEA-COMP:9685"/>
        <dbReference type="Rhea" id="RHEA-COMP:9752"/>
        <dbReference type="Rhea" id="RHEA-COMP:9928"/>
        <dbReference type="ChEBI" id="CHEBI:15378"/>
        <dbReference type="ChEBI" id="CHEBI:29969"/>
        <dbReference type="ChEBI" id="CHEBI:64479"/>
        <dbReference type="ChEBI" id="CHEBI:78463"/>
        <dbReference type="ChEBI" id="CHEBI:78809"/>
        <dbReference type="EC" id="2.3.1.181"/>
    </reaction>
</comment>
<comment type="pathway">
    <text evidence="1">Protein modification; protein lipoylation via endogenous pathway; protein N(6)-(lipoyl)lysine from octanoyl-[acyl-carrier-protein]: step 1/2.</text>
</comment>
<comment type="subcellular location">
    <subcellularLocation>
        <location evidence="1">Cytoplasm</location>
    </subcellularLocation>
</comment>
<comment type="miscellaneous">
    <text evidence="1">In the reaction, the free carboxyl group of octanoic acid is attached via an amide linkage to the epsilon-amino group of a specific lysine residue of lipoyl domains of lipoate-dependent enzymes.</text>
</comment>
<comment type="similarity">
    <text evidence="1">Belongs to the LipB family.</text>
</comment>
<gene>
    <name evidence="1" type="primary">lipB</name>
    <name type="ordered locus">MRA_2233</name>
</gene>
<protein>
    <recommendedName>
        <fullName evidence="1">Octanoyltransferase</fullName>
        <ecNumber evidence="1">2.3.1.181</ecNumber>
    </recommendedName>
    <alternativeName>
        <fullName evidence="1">Lipoate-protein ligase B</fullName>
    </alternativeName>
    <alternativeName>
        <fullName evidence="1">Lipoyl/octanoyl transferase</fullName>
    </alternativeName>
    <alternativeName>
        <fullName evidence="1">Octanoyl-[acyl-carrier-protein]-protein N-octanoyltransferase</fullName>
    </alternativeName>
</protein>
<evidence type="ECO:0000255" key="1">
    <source>
        <dbReference type="HAMAP-Rule" id="MF_00013"/>
    </source>
</evidence>
<evidence type="ECO:0000255" key="2">
    <source>
        <dbReference type="PROSITE-ProRule" id="PRU01067"/>
    </source>
</evidence>
<sequence>MTGSIRSKLSAIDVRQLGTVDYRTAWQLQRELADARVAGGADTLLLLEHPAVYTAGRRTETHERPIDGTPVVDTDRGGKITWHGPGQLVGYPIIGLAEPLDVVNYVRRLEESLIQVCADLGLHAGRVDGRSGVWLPGRPARKVAAIGVRVSRATTLHGFALNCDCDLAAFTAIVPCGISDAAVTSLSAELGRTVTVDEVRATVAAAVCAALDGVLPVGDRVPSHAVPSPL</sequence>
<accession>A5U4P5</accession>